<accession>A1S208</accession>
<comment type="function">
    <text evidence="1">Binds directly to 23S rRNA. The L1 stalk is quite mobile in the ribosome, and is involved in E site tRNA release.</text>
</comment>
<comment type="function">
    <text evidence="1">Protein L1 is also a translational repressor protein, it controls the translation of the L11 operon by binding to its mRNA.</text>
</comment>
<comment type="subunit">
    <text evidence="1">Part of the 50S ribosomal subunit.</text>
</comment>
<comment type="similarity">
    <text evidence="1">Belongs to the universal ribosomal protein uL1 family.</text>
</comment>
<feature type="chain" id="PRO_0000308098" description="Large ribosomal subunit protein uL1">
    <location>
        <begin position="1"/>
        <end position="233"/>
    </location>
</feature>
<evidence type="ECO:0000255" key="1">
    <source>
        <dbReference type="HAMAP-Rule" id="MF_01318"/>
    </source>
</evidence>
<evidence type="ECO:0000305" key="2"/>
<protein>
    <recommendedName>
        <fullName evidence="1">Large ribosomal subunit protein uL1</fullName>
    </recommendedName>
    <alternativeName>
        <fullName evidence="2">50S ribosomal protein L1</fullName>
    </alternativeName>
</protein>
<sequence length="233" mass="24761">MAKLTKRMRVIREKVDATKAYDINEAITLLKELATAKFVESVDVAVNLGVDPRKSDQNVRGAIVLPHGTGRDVRVAVFTQGANAEAAKEAGAELVGMEDLAEQVKAGEMNFDVVIASPDAMRVVGMLGQILGPRGLMPNPKTGTVTPNVAEAVKNAKAGQVRYRNDKNGIIHTTIGKVDFDSVKLKENLEALLVALKKQKPAAAKGQYVKKVSISTTMGAGVAVDQNTLEATA</sequence>
<dbReference type="EMBL" id="CP000507">
    <property type="protein sequence ID" value="ABL98414.1"/>
    <property type="molecule type" value="Genomic_DNA"/>
</dbReference>
<dbReference type="RefSeq" id="WP_011758325.1">
    <property type="nucleotide sequence ID" value="NC_008700.1"/>
</dbReference>
<dbReference type="SMR" id="A1S208"/>
<dbReference type="STRING" id="326297.Sama_0203"/>
<dbReference type="KEGG" id="saz:Sama_0203"/>
<dbReference type="eggNOG" id="COG0081">
    <property type="taxonomic scope" value="Bacteria"/>
</dbReference>
<dbReference type="HOGENOM" id="CLU_062853_0_0_6"/>
<dbReference type="OrthoDB" id="9803740at2"/>
<dbReference type="Proteomes" id="UP000009175">
    <property type="component" value="Chromosome"/>
</dbReference>
<dbReference type="GO" id="GO:0022625">
    <property type="term" value="C:cytosolic large ribosomal subunit"/>
    <property type="evidence" value="ECO:0007669"/>
    <property type="project" value="TreeGrafter"/>
</dbReference>
<dbReference type="GO" id="GO:0019843">
    <property type="term" value="F:rRNA binding"/>
    <property type="evidence" value="ECO:0007669"/>
    <property type="project" value="UniProtKB-UniRule"/>
</dbReference>
<dbReference type="GO" id="GO:0003735">
    <property type="term" value="F:structural constituent of ribosome"/>
    <property type="evidence" value="ECO:0007669"/>
    <property type="project" value="InterPro"/>
</dbReference>
<dbReference type="GO" id="GO:0000049">
    <property type="term" value="F:tRNA binding"/>
    <property type="evidence" value="ECO:0007669"/>
    <property type="project" value="UniProtKB-KW"/>
</dbReference>
<dbReference type="GO" id="GO:0006417">
    <property type="term" value="P:regulation of translation"/>
    <property type="evidence" value="ECO:0007669"/>
    <property type="project" value="UniProtKB-KW"/>
</dbReference>
<dbReference type="GO" id="GO:0006412">
    <property type="term" value="P:translation"/>
    <property type="evidence" value="ECO:0007669"/>
    <property type="project" value="UniProtKB-UniRule"/>
</dbReference>
<dbReference type="CDD" id="cd00403">
    <property type="entry name" value="Ribosomal_L1"/>
    <property type="match status" value="1"/>
</dbReference>
<dbReference type="FunFam" id="3.40.50.790:FF:000001">
    <property type="entry name" value="50S ribosomal protein L1"/>
    <property type="match status" value="1"/>
</dbReference>
<dbReference type="Gene3D" id="3.30.190.20">
    <property type="match status" value="1"/>
</dbReference>
<dbReference type="Gene3D" id="3.40.50.790">
    <property type="match status" value="1"/>
</dbReference>
<dbReference type="HAMAP" id="MF_01318_B">
    <property type="entry name" value="Ribosomal_uL1_B"/>
    <property type="match status" value="1"/>
</dbReference>
<dbReference type="InterPro" id="IPR005878">
    <property type="entry name" value="Ribosom_uL1_bac-type"/>
</dbReference>
<dbReference type="InterPro" id="IPR002143">
    <property type="entry name" value="Ribosomal_uL1"/>
</dbReference>
<dbReference type="InterPro" id="IPR023674">
    <property type="entry name" value="Ribosomal_uL1-like"/>
</dbReference>
<dbReference type="InterPro" id="IPR028364">
    <property type="entry name" value="Ribosomal_uL1/biogenesis"/>
</dbReference>
<dbReference type="InterPro" id="IPR016095">
    <property type="entry name" value="Ribosomal_uL1_3-a/b-sand"/>
</dbReference>
<dbReference type="InterPro" id="IPR023673">
    <property type="entry name" value="Ribosomal_uL1_CS"/>
</dbReference>
<dbReference type="NCBIfam" id="TIGR01169">
    <property type="entry name" value="rplA_bact"/>
    <property type="match status" value="1"/>
</dbReference>
<dbReference type="PANTHER" id="PTHR36427">
    <property type="entry name" value="54S RIBOSOMAL PROTEIN L1, MITOCHONDRIAL"/>
    <property type="match status" value="1"/>
</dbReference>
<dbReference type="PANTHER" id="PTHR36427:SF3">
    <property type="entry name" value="LARGE RIBOSOMAL SUBUNIT PROTEIN UL1M"/>
    <property type="match status" value="1"/>
</dbReference>
<dbReference type="Pfam" id="PF00687">
    <property type="entry name" value="Ribosomal_L1"/>
    <property type="match status" value="1"/>
</dbReference>
<dbReference type="PIRSF" id="PIRSF002155">
    <property type="entry name" value="Ribosomal_L1"/>
    <property type="match status" value="1"/>
</dbReference>
<dbReference type="SUPFAM" id="SSF56808">
    <property type="entry name" value="Ribosomal protein L1"/>
    <property type="match status" value="1"/>
</dbReference>
<dbReference type="PROSITE" id="PS01199">
    <property type="entry name" value="RIBOSOMAL_L1"/>
    <property type="match status" value="1"/>
</dbReference>
<organism>
    <name type="scientific">Shewanella amazonensis (strain ATCC BAA-1098 / SB2B)</name>
    <dbReference type="NCBI Taxonomy" id="326297"/>
    <lineage>
        <taxon>Bacteria</taxon>
        <taxon>Pseudomonadati</taxon>
        <taxon>Pseudomonadota</taxon>
        <taxon>Gammaproteobacteria</taxon>
        <taxon>Alteromonadales</taxon>
        <taxon>Shewanellaceae</taxon>
        <taxon>Shewanella</taxon>
    </lineage>
</organism>
<reference key="1">
    <citation type="submission" date="2006-12" db="EMBL/GenBank/DDBJ databases">
        <title>Complete sequence of Shewanella amazonensis SB2B.</title>
        <authorList>
            <consortium name="US DOE Joint Genome Institute"/>
            <person name="Copeland A."/>
            <person name="Lucas S."/>
            <person name="Lapidus A."/>
            <person name="Barry K."/>
            <person name="Detter J.C."/>
            <person name="Glavina del Rio T."/>
            <person name="Hammon N."/>
            <person name="Israni S."/>
            <person name="Dalin E."/>
            <person name="Tice H."/>
            <person name="Pitluck S."/>
            <person name="Munk A.C."/>
            <person name="Brettin T."/>
            <person name="Bruce D."/>
            <person name="Han C."/>
            <person name="Tapia R."/>
            <person name="Gilna P."/>
            <person name="Schmutz J."/>
            <person name="Larimer F."/>
            <person name="Land M."/>
            <person name="Hauser L."/>
            <person name="Kyrpides N."/>
            <person name="Mikhailova N."/>
            <person name="Fredrickson J."/>
            <person name="Richardson P."/>
        </authorList>
    </citation>
    <scope>NUCLEOTIDE SEQUENCE [LARGE SCALE GENOMIC DNA]</scope>
    <source>
        <strain>ATCC BAA-1098 / SB2B</strain>
    </source>
</reference>
<proteinExistence type="inferred from homology"/>
<name>RL1_SHEAM</name>
<keyword id="KW-1185">Reference proteome</keyword>
<keyword id="KW-0678">Repressor</keyword>
<keyword id="KW-0687">Ribonucleoprotein</keyword>
<keyword id="KW-0689">Ribosomal protein</keyword>
<keyword id="KW-0694">RNA-binding</keyword>
<keyword id="KW-0699">rRNA-binding</keyword>
<keyword id="KW-0810">Translation regulation</keyword>
<keyword id="KW-0820">tRNA-binding</keyword>
<gene>
    <name evidence="1" type="primary">rplA</name>
    <name type="ordered locus">Sama_0203</name>
</gene>